<sequence length="111" mass="12856">MDPRERVPPGNSDEETVGEAFAWLERTITELNRVAVNHLPRELIFQVWQRSWAYWREEQGMSISYTKYRYLLLMQKAMFVHYTKGCRCLQEGHGPGGWRSGPPPPPPPGLA</sequence>
<keyword id="KW-0014">AIDS</keyword>
<keyword id="KW-1048">Host nucleus</keyword>
<keyword id="KW-0945">Host-virus interaction</keyword>
<keyword id="KW-1090">Inhibition of host innate immune response by virus</keyword>
<keyword id="KW-0899">Viral immunoevasion</keyword>
<keyword id="KW-0946">Virion</keyword>
<comment type="function">
    <text evidence="1">Plays a role in nuclear translocation of the viral pre-integration complex (PIC), thus is required for the virus to infect non-dividing cells. Targets specific host proteins for degradation by the 26S proteasome. Acts by associating with the cellular CUL4A-DDB1 E3 ligase complex through direct interaction with host VPRPB/DCAF-1. This change in the E3 ligase substrate specificity results in the degradation of host SAMHD1. In turn, SAMHD1 depletion allows viral replication in host myeloid cells by preventing SAMHD1-mediated hydrolysis of intracellular dNTPs necessary for reverse transcription (By similarity).</text>
</comment>
<comment type="subunit">
    <text evidence="1 2 3">Interacts with the P6 region of unprocessed GAG (By similarity). Interacts with host VPRBP/DCAF1, leading to change substrate specificity of the CUL4A-DDB1 E3 ligase complex (By similarity). Interacts with host NUP153 (By similarity).</text>
</comment>
<comment type="subcellular location">
    <subcellularLocation>
        <location>Virion</location>
    </subcellularLocation>
    <subcellularLocation>
        <location>Host nucleus</location>
    </subcellularLocation>
    <text evidence="1">Nuclear just after virion uncoating, or if expressed in the absence of unprocessed GAG.</text>
</comment>
<comment type="similarity">
    <text evidence="5">Belongs to the lentivirus VPX protein family.</text>
</comment>
<dbReference type="EMBL" id="X61240">
    <property type="status" value="NOT_ANNOTATED_CDS"/>
    <property type="molecule type" value="Genomic_DNA"/>
</dbReference>
<dbReference type="PIR" id="S08438">
    <property type="entry name" value="S08438"/>
</dbReference>
<dbReference type="SMR" id="P15836"/>
<dbReference type="Proteomes" id="UP000247120">
    <property type="component" value="Segment"/>
</dbReference>
<dbReference type="GO" id="GO:0042025">
    <property type="term" value="C:host cell nucleus"/>
    <property type="evidence" value="ECO:0007669"/>
    <property type="project" value="UniProtKB-SubCell"/>
</dbReference>
<dbReference type="GO" id="GO:0044423">
    <property type="term" value="C:virion component"/>
    <property type="evidence" value="ECO:0007669"/>
    <property type="project" value="UniProtKB-KW"/>
</dbReference>
<dbReference type="GO" id="GO:0052170">
    <property type="term" value="P:symbiont-mediated suppression of host innate immune response"/>
    <property type="evidence" value="ECO:0007669"/>
    <property type="project" value="UniProtKB-KW"/>
</dbReference>
<dbReference type="GO" id="GO:0019058">
    <property type="term" value="P:viral life cycle"/>
    <property type="evidence" value="ECO:0007669"/>
    <property type="project" value="InterPro"/>
</dbReference>
<dbReference type="Gene3D" id="1.20.5.4730">
    <property type="match status" value="1"/>
</dbReference>
<dbReference type="InterPro" id="IPR053711">
    <property type="entry name" value="Lentiviral_Vpx_assoc_factor"/>
</dbReference>
<dbReference type="InterPro" id="IPR000012">
    <property type="entry name" value="RetroV_VpR/X"/>
</dbReference>
<dbReference type="Pfam" id="PF00522">
    <property type="entry name" value="VPR"/>
    <property type="match status" value="1"/>
</dbReference>
<gene>
    <name type="primary">vpx</name>
</gene>
<name>VPX_HV2D2</name>
<proteinExistence type="inferred from homology"/>
<reference key="1">
    <citation type="journal article" date="1989" name="Nature">
        <title>A highly divergent HIV-2-related isolate.</title>
        <authorList>
            <person name="Dietrich U."/>
            <person name="Adamski M."/>
            <person name="Kreutz R."/>
            <person name="Seipp A."/>
            <person name="Kuehnel H."/>
            <person name="Ruebsamen-Waigmann H."/>
        </authorList>
    </citation>
    <scope>NUCLEOTIDE SEQUENCE [GENOMIC DNA]</scope>
</reference>
<organismHost>
    <name type="scientific">Homo sapiens</name>
    <name type="common">Human</name>
    <dbReference type="NCBI Taxonomy" id="9606"/>
</organismHost>
<organism>
    <name type="scientific">Human immunodeficiency virus type 2 subtype B (isolate D205)</name>
    <name type="common">HIV-2</name>
    <dbReference type="NCBI Taxonomy" id="11716"/>
    <lineage>
        <taxon>Viruses</taxon>
        <taxon>Riboviria</taxon>
        <taxon>Pararnavirae</taxon>
        <taxon>Artverviricota</taxon>
        <taxon>Revtraviricetes</taxon>
        <taxon>Ortervirales</taxon>
        <taxon>Retroviridae</taxon>
        <taxon>Orthoretrovirinae</taxon>
        <taxon>Lentivirus</taxon>
        <taxon>Human immunodeficiency virus 2</taxon>
    </lineage>
</organism>
<evidence type="ECO:0000250" key="1"/>
<evidence type="ECO:0000250" key="2">
    <source>
        <dbReference type="UniProtKB" id="P12454"/>
    </source>
</evidence>
<evidence type="ECO:0000250" key="3">
    <source>
        <dbReference type="UniProtKB" id="P18099"/>
    </source>
</evidence>
<evidence type="ECO:0000250" key="4">
    <source>
        <dbReference type="UniProtKB" id="P19508"/>
    </source>
</evidence>
<evidence type="ECO:0000305" key="5"/>
<feature type="chain" id="PRO_0000085392" description="Protein Vpx">
    <location>
        <begin position="1"/>
        <end position="111"/>
    </location>
</feature>
<feature type="region of interest" description="Binds to human NUP153" evidence="4">
    <location>
        <begin position="60"/>
        <end position="79"/>
    </location>
</feature>
<feature type="short sequence motif" description="Nuclear localization signal" evidence="1">
    <location>
        <begin position="64"/>
        <end position="71"/>
    </location>
</feature>
<accession>P15836</accession>
<protein>
    <recommendedName>
        <fullName>Protein Vpx</fullName>
    </recommendedName>
    <alternativeName>
        <fullName>Viral protein X</fullName>
    </alternativeName>
    <alternativeName>
        <fullName>X ORF protein</fullName>
    </alternativeName>
</protein>